<evidence type="ECO:0000250" key="1"/>
<evidence type="ECO:0000250" key="2">
    <source>
        <dbReference type="UniProtKB" id="P25025"/>
    </source>
</evidence>
<evidence type="ECO:0000255" key="3"/>
<evidence type="ECO:0000255" key="4">
    <source>
        <dbReference type="PROSITE-ProRule" id="PRU00521"/>
    </source>
</evidence>
<organism>
    <name type="scientific">Oryctolagus cuniculus</name>
    <name type="common">Rabbit</name>
    <dbReference type="NCBI Taxonomy" id="9986"/>
    <lineage>
        <taxon>Eukaryota</taxon>
        <taxon>Metazoa</taxon>
        <taxon>Chordata</taxon>
        <taxon>Craniata</taxon>
        <taxon>Vertebrata</taxon>
        <taxon>Euteleostomi</taxon>
        <taxon>Mammalia</taxon>
        <taxon>Eutheria</taxon>
        <taxon>Euarchontoglires</taxon>
        <taxon>Glires</taxon>
        <taxon>Lagomorpha</taxon>
        <taxon>Leporidae</taxon>
        <taxon>Oryctolagus</taxon>
    </lineage>
</organism>
<sequence>MQEFTWENYSYEDFFGDFSNYSYSTDLPPTLLDSAPCRSESLETNSYVVLITYILVFLLSLLGNSLVMLVILYSRSTCSVTDVYLLNLAIADLLFATTLPIWAASKVHGWTFGTPLCKVVSLVKEVNFYSGILLLACISVDRYLAIVHATRTMIQKRHLVKFICLSMWGVSLILSLPILLFRNAIFPPNSSPVCYEDMGNSTAKWRMVLRILPQTFGFILPLLVMLFCYVFTLRTLFQAHMGQKHRAMRVIFAVVLIFLLCWLPYNLVLLTDTLMRTHVIQETCERRNDIDRALDATEILGFLHSCLNPIIYAFIGQKFRYGLLKILAAHGLISKEFLAKESRPSFVASSSGNTSTTL</sequence>
<protein>
    <recommendedName>
        <fullName>C-X-C chemokine receptor type 2</fullName>
        <shortName>CXC-R2</shortName>
        <shortName>CXCR-2</shortName>
    </recommendedName>
    <alternativeName>
        <fullName>GRO/MGSA receptor</fullName>
    </alternativeName>
    <alternativeName>
        <fullName>High affinity interleukin-8 receptor B</fullName>
        <shortName>IL-8R B</shortName>
    </alternativeName>
    <cdAntigenName>CD182</cdAntigenName>
</protein>
<accession>P35344</accession>
<reference key="1">
    <citation type="journal article" date="1994" name="J. Biol. Chem.">
        <title>Molecular characterization of a novel rabbit interleukin-8 receptor isotype.</title>
        <authorList>
            <person name="Prado G.N."/>
            <person name="Thomas K.M."/>
            <person name="Suzuki H."/>
            <person name="Larosa G.J."/>
            <person name="Wilkinson N.C."/>
            <person name="Folco E."/>
            <person name="Navarro J."/>
        </authorList>
    </citation>
    <scope>NUCLEOTIDE SEQUENCE [MRNA]</scope>
    <source>
        <strain>Albino</strain>
        <tissue>Blood</tissue>
    </source>
</reference>
<name>CXCR2_RABIT</name>
<keyword id="KW-1003">Cell membrane</keyword>
<keyword id="KW-0145">Chemotaxis</keyword>
<keyword id="KW-1015">Disulfide bond</keyword>
<keyword id="KW-0297">G-protein coupled receptor</keyword>
<keyword id="KW-0325">Glycoprotein</keyword>
<keyword id="KW-0472">Membrane</keyword>
<keyword id="KW-0597">Phosphoprotein</keyword>
<keyword id="KW-0675">Receptor</keyword>
<keyword id="KW-1185">Reference proteome</keyword>
<keyword id="KW-0807">Transducer</keyword>
<keyword id="KW-0812">Transmembrane</keyword>
<keyword id="KW-1133">Transmembrane helix</keyword>
<gene>
    <name type="primary">CXCR2</name>
    <name type="synonym">IL8RB</name>
</gene>
<proteinExistence type="evidence at transcript level"/>
<comment type="function">
    <text evidence="2">Receptor for interleukin-8 which is a powerful neutrophil chemotactic factor. Binding of IL-8 to the receptor causes activation of neutrophils. This response is mediated via a G-protein that activates a phosphatidylinositol-calcium second messenger system. Binds to IL-8 with high affinity. Also binds with high affinity to CXCL3, GRO/MGSA and NAP-2.</text>
</comment>
<comment type="subunit">
    <text evidence="2">Interacts with IL8. Interacts with GNAI2.</text>
</comment>
<comment type="subcellular location">
    <subcellularLocation>
        <location>Cell membrane</location>
        <topology>Multi-pass membrane protein</topology>
    </subcellularLocation>
</comment>
<comment type="tissue specificity">
    <text>Expressed preferentially in neutrophils.</text>
</comment>
<comment type="PTM">
    <text evidence="1">Phosphorylated upon ligand binding; which is required for desensitization.</text>
</comment>
<comment type="similarity">
    <text evidence="4">Belongs to the G-protein coupled receptor 1 family.</text>
</comment>
<dbReference type="EMBL" id="L24445">
    <property type="protein sequence ID" value="AAA31378.1"/>
    <property type="molecule type" value="mRNA"/>
</dbReference>
<dbReference type="PIR" id="A53752">
    <property type="entry name" value="A53752"/>
</dbReference>
<dbReference type="RefSeq" id="NP_001164561.1">
    <property type="nucleotide sequence ID" value="NM_001171090.1"/>
</dbReference>
<dbReference type="SMR" id="P35344"/>
<dbReference type="FunCoup" id="P35344">
    <property type="interactions" value="166"/>
</dbReference>
<dbReference type="STRING" id="9986.ENSOCUP00000049663"/>
<dbReference type="BindingDB" id="P35344"/>
<dbReference type="ChEMBL" id="CHEMBL1075198"/>
<dbReference type="GlyCosmos" id="P35344">
    <property type="glycosylation" value="2 sites, No reported glycans"/>
</dbReference>
<dbReference type="GeneID" id="100328627"/>
<dbReference type="KEGG" id="ocu:100328627"/>
<dbReference type="CTD" id="3579"/>
<dbReference type="InParanoid" id="P35344"/>
<dbReference type="OrthoDB" id="9946013at2759"/>
<dbReference type="PRO" id="PR:P35344"/>
<dbReference type="Proteomes" id="UP000001811">
    <property type="component" value="Unplaced"/>
</dbReference>
<dbReference type="GO" id="GO:0009897">
    <property type="term" value="C:external side of plasma membrane"/>
    <property type="evidence" value="ECO:0007669"/>
    <property type="project" value="TreeGrafter"/>
</dbReference>
<dbReference type="GO" id="GO:0019957">
    <property type="term" value="F:C-C chemokine binding"/>
    <property type="evidence" value="ECO:0007669"/>
    <property type="project" value="TreeGrafter"/>
</dbReference>
<dbReference type="GO" id="GO:0016493">
    <property type="term" value="F:C-C chemokine receptor activity"/>
    <property type="evidence" value="ECO:0007669"/>
    <property type="project" value="TreeGrafter"/>
</dbReference>
<dbReference type="GO" id="GO:0016494">
    <property type="term" value="F:C-X-C chemokine receptor activity"/>
    <property type="evidence" value="ECO:0007669"/>
    <property type="project" value="InterPro"/>
</dbReference>
<dbReference type="GO" id="GO:0019959">
    <property type="term" value="F:interleukin-8 binding"/>
    <property type="evidence" value="ECO:0007669"/>
    <property type="project" value="InterPro"/>
</dbReference>
<dbReference type="GO" id="GO:0019722">
    <property type="term" value="P:calcium-mediated signaling"/>
    <property type="evidence" value="ECO:0007669"/>
    <property type="project" value="TreeGrafter"/>
</dbReference>
<dbReference type="GO" id="GO:0006955">
    <property type="term" value="P:immune response"/>
    <property type="evidence" value="ECO:0007669"/>
    <property type="project" value="TreeGrafter"/>
</dbReference>
<dbReference type="GO" id="GO:0030593">
    <property type="term" value="P:neutrophil chemotaxis"/>
    <property type="evidence" value="ECO:0007669"/>
    <property type="project" value="TreeGrafter"/>
</dbReference>
<dbReference type="GO" id="GO:0007204">
    <property type="term" value="P:positive regulation of cytosolic calcium ion concentration"/>
    <property type="evidence" value="ECO:0007669"/>
    <property type="project" value="TreeGrafter"/>
</dbReference>
<dbReference type="CDD" id="cd15178">
    <property type="entry name" value="7tmA_CXCR1_2"/>
    <property type="match status" value="1"/>
</dbReference>
<dbReference type="FunFam" id="1.20.1070.10:FF:000157">
    <property type="entry name" value="C-X-C chemokine receptor type 2"/>
    <property type="match status" value="1"/>
</dbReference>
<dbReference type="Gene3D" id="1.20.1070.10">
    <property type="entry name" value="Rhodopsin 7-helix transmembrane proteins"/>
    <property type="match status" value="1"/>
</dbReference>
<dbReference type="InterPro" id="IPR050119">
    <property type="entry name" value="CCR1-9-like"/>
</dbReference>
<dbReference type="InterPro" id="IPR000057">
    <property type="entry name" value="Chemokine_CXCR2"/>
</dbReference>
<dbReference type="InterPro" id="IPR000174">
    <property type="entry name" value="Chemokine_CXCR_1/2"/>
</dbReference>
<dbReference type="InterPro" id="IPR000276">
    <property type="entry name" value="GPCR_Rhodpsn"/>
</dbReference>
<dbReference type="InterPro" id="IPR017452">
    <property type="entry name" value="GPCR_Rhodpsn_7TM"/>
</dbReference>
<dbReference type="PANTHER" id="PTHR10489:SF689">
    <property type="entry name" value="C-X-C CHEMOKINE RECEPTOR TYPE 2"/>
    <property type="match status" value="1"/>
</dbReference>
<dbReference type="PANTHER" id="PTHR10489">
    <property type="entry name" value="CELL ADHESION MOLECULE"/>
    <property type="match status" value="1"/>
</dbReference>
<dbReference type="Pfam" id="PF00001">
    <property type="entry name" value="7tm_1"/>
    <property type="match status" value="1"/>
</dbReference>
<dbReference type="PRINTS" id="PR00237">
    <property type="entry name" value="GPCRRHODOPSN"/>
</dbReference>
<dbReference type="PRINTS" id="PR00427">
    <property type="entry name" value="INTRLEUKIN8R"/>
</dbReference>
<dbReference type="PRINTS" id="PR00573">
    <property type="entry name" value="INTRLEUKN8BR"/>
</dbReference>
<dbReference type="SUPFAM" id="SSF81321">
    <property type="entry name" value="Family A G protein-coupled receptor-like"/>
    <property type="match status" value="1"/>
</dbReference>
<dbReference type="PROSITE" id="PS00237">
    <property type="entry name" value="G_PROTEIN_RECEP_F1_1"/>
    <property type="match status" value="1"/>
</dbReference>
<dbReference type="PROSITE" id="PS50262">
    <property type="entry name" value="G_PROTEIN_RECEP_F1_2"/>
    <property type="match status" value="1"/>
</dbReference>
<feature type="chain" id="PRO_0000069341" description="C-X-C chemokine receptor type 2">
    <location>
        <begin position="1"/>
        <end position="358"/>
    </location>
</feature>
<feature type="topological domain" description="Extracellular" evidence="3">
    <location>
        <begin position="1"/>
        <end position="46"/>
    </location>
</feature>
<feature type="transmembrane region" description="Helical; Name=1" evidence="3">
    <location>
        <begin position="47"/>
        <end position="73"/>
    </location>
</feature>
<feature type="topological domain" description="Cytoplasmic" evidence="3">
    <location>
        <begin position="74"/>
        <end position="82"/>
    </location>
</feature>
<feature type="transmembrane region" description="Helical; Name=2" evidence="3">
    <location>
        <begin position="83"/>
        <end position="103"/>
    </location>
</feature>
<feature type="topological domain" description="Extracellular" evidence="3">
    <location>
        <begin position="104"/>
        <end position="118"/>
    </location>
</feature>
<feature type="transmembrane region" description="Helical; Name=3" evidence="3">
    <location>
        <begin position="119"/>
        <end position="140"/>
    </location>
</feature>
<feature type="topological domain" description="Cytoplasmic" evidence="3">
    <location>
        <begin position="141"/>
        <end position="161"/>
    </location>
</feature>
<feature type="transmembrane region" description="Helical; Name=4" evidence="3">
    <location>
        <begin position="162"/>
        <end position="181"/>
    </location>
</feature>
<feature type="topological domain" description="Extracellular" evidence="3">
    <location>
        <begin position="182"/>
        <end position="206"/>
    </location>
</feature>
<feature type="transmembrane region" description="Helical; Name=5" evidence="3">
    <location>
        <begin position="207"/>
        <end position="229"/>
    </location>
</feature>
<feature type="topological domain" description="Cytoplasmic" evidence="3">
    <location>
        <begin position="230"/>
        <end position="249"/>
    </location>
</feature>
<feature type="transmembrane region" description="Helical; Name=6" evidence="3">
    <location>
        <begin position="250"/>
        <end position="271"/>
    </location>
</feature>
<feature type="topological domain" description="Extracellular" evidence="3">
    <location>
        <begin position="272"/>
        <end position="292"/>
    </location>
</feature>
<feature type="transmembrane region" description="Helical; Name=7" evidence="3">
    <location>
        <begin position="293"/>
        <end position="313"/>
    </location>
</feature>
<feature type="topological domain" description="Cytoplasmic" evidence="3">
    <location>
        <begin position="314"/>
        <end position="358"/>
    </location>
</feature>
<feature type="glycosylation site" description="N-linked (GlcNAc...) asparagine" evidence="3">
    <location>
        <position position="8"/>
    </location>
</feature>
<feature type="glycosylation site" description="N-linked (GlcNAc...) asparagine" evidence="3">
    <location>
        <position position="20"/>
    </location>
</feature>
<feature type="disulfide bond" evidence="4">
    <location>
        <begin position="117"/>
        <end position="194"/>
    </location>
</feature>